<comment type="function">
    <text evidence="1">An essential GTPase which binds GTP, GDP and possibly (p)ppGpp with moderate affinity, with high nucleotide exchange rates and a fairly low GTP hydrolysis rate. Plays a role in control of the cell cycle, stress response, ribosome biogenesis and in those bacteria that undergo differentiation, in morphogenesis control.</text>
</comment>
<comment type="cofactor">
    <cofactor evidence="1">
        <name>Mg(2+)</name>
        <dbReference type="ChEBI" id="CHEBI:18420"/>
    </cofactor>
</comment>
<comment type="subunit">
    <text evidence="1">Monomer.</text>
</comment>
<comment type="subcellular location">
    <subcellularLocation>
        <location evidence="1">Cytoplasm</location>
    </subcellularLocation>
</comment>
<comment type="similarity">
    <text evidence="1">Belongs to the TRAFAC class OBG-HflX-like GTPase superfamily. OBG GTPase family.</text>
</comment>
<comment type="sequence caution" evidence="3">
    <conflict type="erroneous initiation">
        <sequence resource="EMBL-CDS" id="AAF85221"/>
    </conflict>
    <text>Truncated N-terminus.</text>
</comment>
<dbReference type="EC" id="3.6.5.-" evidence="1"/>
<dbReference type="EMBL" id="AE003849">
    <property type="protein sequence ID" value="AAF85221.1"/>
    <property type="status" value="ALT_INIT"/>
    <property type="molecule type" value="Genomic_DNA"/>
</dbReference>
<dbReference type="PIR" id="G82559">
    <property type="entry name" value="G82559"/>
</dbReference>
<dbReference type="SMR" id="Q9PAS3"/>
<dbReference type="STRING" id="160492.XF_2422"/>
<dbReference type="KEGG" id="xfa:XF_2422"/>
<dbReference type="eggNOG" id="COG0536">
    <property type="taxonomic scope" value="Bacteria"/>
</dbReference>
<dbReference type="HOGENOM" id="CLU_011747_2_0_6"/>
<dbReference type="Proteomes" id="UP000000812">
    <property type="component" value="Chromosome"/>
</dbReference>
<dbReference type="GO" id="GO:0005737">
    <property type="term" value="C:cytoplasm"/>
    <property type="evidence" value="ECO:0007669"/>
    <property type="project" value="UniProtKB-SubCell"/>
</dbReference>
<dbReference type="GO" id="GO:0005525">
    <property type="term" value="F:GTP binding"/>
    <property type="evidence" value="ECO:0007669"/>
    <property type="project" value="UniProtKB-UniRule"/>
</dbReference>
<dbReference type="GO" id="GO:0003924">
    <property type="term" value="F:GTPase activity"/>
    <property type="evidence" value="ECO:0007669"/>
    <property type="project" value="UniProtKB-UniRule"/>
</dbReference>
<dbReference type="GO" id="GO:0000287">
    <property type="term" value="F:magnesium ion binding"/>
    <property type="evidence" value="ECO:0007669"/>
    <property type="project" value="InterPro"/>
</dbReference>
<dbReference type="GO" id="GO:0042254">
    <property type="term" value="P:ribosome biogenesis"/>
    <property type="evidence" value="ECO:0007669"/>
    <property type="project" value="UniProtKB-UniRule"/>
</dbReference>
<dbReference type="CDD" id="cd01898">
    <property type="entry name" value="Obg"/>
    <property type="match status" value="1"/>
</dbReference>
<dbReference type="FunFam" id="2.70.210.12:FF:000001">
    <property type="entry name" value="GTPase Obg"/>
    <property type="match status" value="1"/>
</dbReference>
<dbReference type="Gene3D" id="2.70.210.12">
    <property type="entry name" value="GTP1/OBG domain"/>
    <property type="match status" value="1"/>
</dbReference>
<dbReference type="Gene3D" id="3.40.50.300">
    <property type="entry name" value="P-loop containing nucleotide triphosphate hydrolases"/>
    <property type="match status" value="1"/>
</dbReference>
<dbReference type="HAMAP" id="MF_01454">
    <property type="entry name" value="GTPase_Obg"/>
    <property type="match status" value="1"/>
</dbReference>
<dbReference type="InterPro" id="IPR031167">
    <property type="entry name" value="G_OBG"/>
</dbReference>
<dbReference type="InterPro" id="IPR006073">
    <property type="entry name" value="GTP-bd"/>
</dbReference>
<dbReference type="InterPro" id="IPR014100">
    <property type="entry name" value="GTP-bd_Obg/CgtA"/>
</dbReference>
<dbReference type="InterPro" id="IPR006074">
    <property type="entry name" value="GTP1-OBG_CS"/>
</dbReference>
<dbReference type="InterPro" id="IPR006169">
    <property type="entry name" value="GTP1_OBG_dom"/>
</dbReference>
<dbReference type="InterPro" id="IPR036726">
    <property type="entry name" value="GTP1_OBG_dom_sf"/>
</dbReference>
<dbReference type="InterPro" id="IPR045086">
    <property type="entry name" value="OBG_GTPase"/>
</dbReference>
<dbReference type="InterPro" id="IPR027417">
    <property type="entry name" value="P-loop_NTPase"/>
</dbReference>
<dbReference type="NCBIfam" id="TIGR02729">
    <property type="entry name" value="Obg_CgtA"/>
    <property type="match status" value="1"/>
</dbReference>
<dbReference type="NCBIfam" id="NF008955">
    <property type="entry name" value="PRK12297.1"/>
    <property type="match status" value="1"/>
</dbReference>
<dbReference type="NCBIfam" id="NF008956">
    <property type="entry name" value="PRK12299.1"/>
    <property type="match status" value="1"/>
</dbReference>
<dbReference type="PANTHER" id="PTHR11702">
    <property type="entry name" value="DEVELOPMENTALLY REGULATED GTP-BINDING PROTEIN-RELATED"/>
    <property type="match status" value="1"/>
</dbReference>
<dbReference type="PANTHER" id="PTHR11702:SF31">
    <property type="entry name" value="MITOCHONDRIAL RIBOSOME-ASSOCIATED GTPASE 2"/>
    <property type="match status" value="1"/>
</dbReference>
<dbReference type="Pfam" id="PF01018">
    <property type="entry name" value="GTP1_OBG"/>
    <property type="match status" value="1"/>
</dbReference>
<dbReference type="Pfam" id="PF01926">
    <property type="entry name" value="MMR_HSR1"/>
    <property type="match status" value="1"/>
</dbReference>
<dbReference type="PIRSF" id="PIRSF002401">
    <property type="entry name" value="GTP_bd_Obg/CgtA"/>
    <property type="match status" value="1"/>
</dbReference>
<dbReference type="PRINTS" id="PR00326">
    <property type="entry name" value="GTP1OBG"/>
</dbReference>
<dbReference type="SUPFAM" id="SSF82051">
    <property type="entry name" value="Obg GTP-binding protein N-terminal domain"/>
    <property type="match status" value="1"/>
</dbReference>
<dbReference type="SUPFAM" id="SSF52540">
    <property type="entry name" value="P-loop containing nucleoside triphosphate hydrolases"/>
    <property type="match status" value="1"/>
</dbReference>
<dbReference type="PROSITE" id="PS51710">
    <property type="entry name" value="G_OBG"/>
    <property type="match status" value="1"/>
</dbReference>
<dbReference type="PROSITE" id="PS00905">
    <property type="entry name" value="GTP1_OBG"/>
    <property type="match status" value="1"/>
</dbReference>
<dbReference type="PROSITE" id="PS51883">
    <property type="entry name" value="OBG"/>
    <property type="match status" value="1"/>
</dbReference>
<evidence type="ECO:0000255" key="1">
    <source>
        <dbReference type="HAMAP-Rule" id="MF_01454"/>
    </source>
</evidence>
<evidence type="ECO:0000255" key="2">
    <source>
        <dbReference type="PROSITE-ProRule" id="PRU01231"/>
    </source>
</evidence>
<evidence type="ECO:0000305" key="3"/>
<accession>Q9PAS3</accession>
<name>OBG_XYLFA</name>
<gene>
    <name evidence="1" type="primary">obg</name>
    <name type="ordered locus">XF_2422</name>
</gene>
<protein>
    <recommendedName>
        <fullName evidence="1">GTPase Obg</fullName>
        <ecNumber evidence="1">3.6.5.-</ecNumber>
    </recommendedName>
    <alternativeName>
        <fullName evidence="1">GTP-binding protein Obg</fullName>
    </alternativeName>
</protein>
<feature type="chain" id="PRO_0000386401" description="GTPase Obg">
    <location>
        <begin position="1"/>
        <end position="357"/>
    </location>
</feature>
<feature type="domain" description="Obg" evidence="2">
    <location>
        <begin position="1"/>
        <end position="159"/>
    </location>
</feature>
<feature type="domain" description="OBG-type G" evidence="1">
    <location>
        <begin position="160"/>
        <end position="343"/>
    </location>
</feature>
<feature type="binding site" evidence="1">
    <location>
        <begin position="166"/>
        <end position="173"/>
    </location>
    <ligand>
        <name>GTP</name>
        <dbReference type="ChEBI" id="CHEBI:37565"/>
    </ligand>
</feature>
<feature type="binding site" evidence="1">
    <location>
        <position position="173"/>
    </location>
    <ligand>
        <name>Mg(2+)</name>
        <dbReference type="ChEBI" id="CHEBI:18420"/>
    </ligand>
</feature>
<feature type="binding site" evidence="1">
    <location>
        <begin position="191"/>
        <end position="195"/>
    </location>
    <ligand>
        <name>GTP</name>
        <dbReference type="ChEBI" id="CHEBI:37565"/>
    </ligand>
</feature>
<feature type="binding site" evidence="1">
    <location>
        <position position="193"/>
    </location>
    <ligand>
        <name>Mg(2+)</name>
        <dbReference type="ChEBI" id="CHEBI:18420"/>
    </ligand>
</feature>
<feature type="binding site" evidence="1">
    <location>
        <begin position="213"/>
        <end position="216"/>
    </location>
    <ligand>
        <name>GTP</name>
        <dbReference type="ChEBI" id="CHEBI:37565"/>
    </ligand>
</feature>
<feature type="binding site" evidence="1">
    <location>
        <begin position="293"/>
        <end position="296"/>
    </location>
    <ligand>
        <name>GTP</name>
        <dbReference type="ChEBI" id="CHEBI:37565"/>
    </ligand>
</feature>
<feature type="binding site" evidence="1">
    <location>
        <begin position="324"/>
        <end position="326"/>
    </location>
    <ligand>
        <name>GTP</name>
        <dbReference type="ChEBI" id="CHEBI:37565"/>
    </ligand>
</feature>
<keyword id="KW-0963">Cytoplasm</keyword>
<keyword id="KW-0342">GTP-binding</keyword>
<keyword id="KW-0378">Hydrolase</keyword>
<keyword id="KW-0460">Magnesium</keyword>
<keyword id="KW-0479">Metal-binding</keyword>
<keyword id="KW-0547">Nucleotide-binding</keyword>
<sequence length="357" mass="38774">MKFVDEAEIQVIAGNGGDGCVSFRREKFIPLGGPDGGDGGDGGSVWLVADENLNTLVDFRHERIFKAQRGVNGMGQQMYGKAGQDKIISVPIGTVVINVQTDEVIGDMVRHGDRLLVAKGGTGGLGNMHFKSSINRAPRQARPGEQGEERTLKLELKLLADIGMLGFPNVGKSTFIRAVSAATPKVADYPFTTLYPNLGVVKIEAYSSFVIADVPGLIEGAADGVGLGTQFLRHLQRTKLLLHMVDISATADAYGNEKVGVGLLPIEQVRKLEIELERHDPALLDKPRWLVLNKADLMPQEEAQALAEALIAELHWTAPWYLVSAVSREGTWPIMKSAMTLFEHQREVAAEQSVSSR</sequence>
<organism>
    <name type="scientific">Xylella fastidiosa (strain 9a5c)</name>
    <dbReference type="NCBI Taxonomy" id="160492"/>
    <lineage>
        <taxon>Bacteria</taxon>
        <taxon>Pseudomonadati</taxon>
        <taxon>Pseudomonadota</taxon>
        <taxon>Gammaproteobacteria</taxon>
        <taxon>Lysobacterales</taxon>
        <taxon>Lysobacteraceae</taxon>
        <taxon>Xylella</taxon>
    </lineage>
</organism>
<proteinExistence type="inferred from homology"/>
<reference key="1">
    <citation type="journal article" date="2000" name="Nature">
        <title>The genome sequence of the plant pathogen Xylella fastidiosa.</title>
        <authorList>
            <person name="Simpson A.J.G."/>
            <person name="Reinach F.C."/>
            <person name="Arruda P."/>
            <person name="Abreu F.A."/>
            <person name="Acencio M."/>
            <person name="Alvarenga R."/>
            <person name="Alves L.M.C."/>
            <person name="Araya J.E."/>
            <person name="Baia G.S."/>
            <person name="Baptista C.S."/>
            <person name="Barros M.H."/>
            <person name="Bonaccorsi E.D."/>
            <person name="Bordin S."/>
            <person name="Bove J.M."/>
            <person name="Briones M.R.S."/>
            <person name="Bueno M.R.P."/>
            <person name="Camargo A.A."/>
            <person name="Camargo L.E.A."/>
            <person name="Carraro D.M."/>
            <person name="Carrer H."/>
            <person name="Colauto N.B."/>
            <person name="Colombo C."/>
            <person name="Costa F.F."/>
            <person name="Costa M.C.R."/>
            <person name="Costa-Neto C.M."/>
            <person name="Coutinho L.L."/>
            <person name="Cristofani M."/>
            <person name="Dias-Neto E."/>
            <person name="Docena C."/>
            <person name="El-Dorry H."/>
            <person name="Facincani A.P."/>
            <person name="Ferreira A.J.S."/>
            <person name="Ferreira V.C.A."/>
            <person name="Ferro J.A."/>
            <person name="Fraga J.S."/>
            <person name="Franca S.C."/>
            <person name="Franco M.C."/>
            <person name="Frohme M."/>
            <person name="Furlan L.R."/>
            <person name="Garnier M."/>
            <person name="Goldman G.H."/>
            <person name="Goldman M.H.S."/>
            <person name="Gomes S.L."/>
            <person name="Gruber A."/>
            <person name="Ho P.L."/>
            <person name="Hoheisel J.D."/>
            <person name="Junqueira M.L."/>
            <person name="Kemper E.L."/>
            <person name="Kitajima J.P."/>
            <person name="Krieger J.E."/>
            <person name="Kuramae E.E."/>
            <person name="Laigret F."/>
            <person name="Lambais M.R."/>
            <person name="Leite L.C.C."/>
            <person name="Lemos E.G.M."/>
            <person name="Lemos M.V.F."/>
            <person name="Lopes S.A."/>
            <person name="Lopes C.R."/>
            <person name="Machado J.A."/>
            <person name="Machado M.A."/>
            <person name="Madeira A.M.B.N."/>
            <person name="Madeira H.M.F."/>
            <person name="Marino C.L."/>
            <person name="Marques M.V."/>
            <person name="Martins E.A.L."/>
            <person name="Martins E.M.F."/>
            <person name="Matsukuma A.Y."/>
            <person name="Menck C.F.M."/>
            <person name="Miracca E.C."/>
            <person name="Miyaki C.Y."/>
            <person name="Monteiro-Vitorello C.B."/>
            <person name="Moon D.H."/>
            <person name="Nagai M.A."/>
            <person name="Nascimento A.L.T.O."/>
            <person name="Netto L.E.S."/>
            <person name="Nhani A. Jr."/>
            <person name="Nobrega F.G."/>
            <person name="Nunes L.R."/>
            <person name="Oliveira M.A."/>
            <person name="de Oliveira M.C."/>
            <person name="de Oliveira R.C."/>
            <person name="Palmieri D.A."/>
            <person name="Paris A."/>
            <person name="Peixoto B.R."/>
            <person name="Pereira G.A.G."/>
            <person name="Pereira H.A. Jr."/>
            <person name="Pesquero J.B."/>
            <person name="Quaggio R.B."/>
            <person name="Roberto P.G."/>
            <person name="Rodrigues V."/>
            <person name="de Rosa A.J.M."/>
            <person name="de Rosa V.E. Jr."/>
            <person name="de Sa R.G."/>
            <person name="Santelli R.V."/>
            <person name="Sawasaki H.E."/>
            <person name="da Silva A.C.R."/>
            <person name="da Silva A.M."/>
            <person name="da Silva F.R."/>
            <person name="Silva W.A. Jr."/>
            <person name="da Silveira J.F."/>
            <person name="Silvestri M.L.Z."/>
            <person name="Siqueira W.J."/>
            <person name="de Souza A.A."/>
            <person name="de Souza A.P."/>
            <person name="Terenzi M.F."/>
            <person name="Truffi D."/>
            <person name="Tsai S.M."/>
            <person name="Tsuhako M.H."/>
            <person name="Vallada H."/>
            <person name="Van Sluys M.A."/>
            <person name="Verjovski-Almeida S."/>
            <person name="Vettore A.L."/>
            <person name="Zago M.A."/>
            <person name="Zatz M."/>
            <person name="Meidanis J."/>
            <person name="Setubal J.C."/>
        </authorList>
    </citation>
    <scope>NUCLEOTIDE SEQUENCE [LARGE SCALE GENOMIC DNA]</scope>
    <source>
        <strain>9a5c</strain>
    </source>
</reference>